<reference key="1">
    <citation type="journal article" date="2008" name="J. Biol. Chem.">
        <title>Three novel collagen VI chains with high homology to the alpha 3 chain.</title>
        <authorList>
            <person name="Gara S.K."/>
            <person name="Grumati P."/>
            <person name="Urciuolo A."/>
            <person name="Bonaldo P."/>
            <person name="Kobbe B."/>
            <person name="Koch M."/>
            <person name="Paulsson M."/>
            <person name="Wagener R."/>
        </authorList>
    </citation>
    <scope>NUCLEOTIDE SEQUENCE [MRNA] (ISOFORM 1)</scope>
    <scope>SUBUNIT</scope>
    <scope>SUBCELLULAR LOCATION</scope>
    <scope>TISSUE SPECIFICITY</scope>
    <source>
        <strain>C57BL/6J</strain>
        <tissue>Lung</tissue>
    </source>
</reference>
<reference key="2">
    <citation type="journal article" date="2005" name="Science">
        <title>The transcriptional landscape of the mammalian genome.</title>
        <authorList>
            <person name="Carninci P."/>
            <person name="Kasukawa T."/>
            <person name="Katayama S."/>
            <person name="Gough J."/>
            <person name="Frith M.C."/>
            <person name="Maeda N."/>
            <person name="Oyama R."/>
            <person name="Ravasi T."/>
            <person name="Lenhard B."/>
            <person name="Wells C."/>
            <person name="Kodzius R."/>
            <person name="Shimokawa K."/>
            <person name="Bajic V.B."/>
            <person name="Brenner S.E."/>
            <person name="Batalov S."/>
            <person name="Forrest A.R."/>
            <person name="Zavolan M."/>
            <person name="Davis M.J."/>
            <person name="Wilming L.G."/>
            <person name="Aidinis V."/>
            <person name="Allen J.E."/>
            <person name="Ambesi-Impiombato A."/>
            <person name="Apweiler R."/>
            <person name="Aturaliya R.N."/>
            <person name="Bailey T.L."/>
            <person name="Bansal M."/>
            <person name="Baxter L."/>
            <person name="Beisel K.W."/>
            <person name="Bersano T."/>
            <person name="Bono H."/>
            <person name="Chalk A.M."/>
            <person name="Chiu K.P."/>
            <person name="Choudhary V."/>
            <person name="Christoffels A."/>
            <person name="Clutterbuck D.R."/>
            <person name="Crowe M.L."/>
            <person name="Dalla E."/>
            <person name="Dalrymple B.P."/>
            <person name="de Bono B."/>
            <person name="Della Gatta G."/>
            <person name="di Bernardo D."/>
            <person name="Down T."/>
            <person name="Engstrom P."/>
            <person name="Fagiolini M."/>
            <person name="Faulkner G."/>
            <person name="Fletcher C.F."/>
            <person name="Fukushima T."/>
            <person name="Furuno M."/>
            <person name="Futaki S."/>
            <person name="Gariboldi M."/>
            <person name="Georgii-Hemming P."/>
            <person name="Gingeras T.R."/>
            <person name="Gojobori T."/>
            <person name="Green R.E."/>
            <person name="Gustincich S."/>
            <person name="Harbers M."/>
            <person name="Hayashi Y."/>
            <person name="Hensch T.K."/>
            <person name="Hirokawa N."/>
            <person name="Hill D."/>
            <person name="Huminiecki L."/>
            <person name="Iacono M."/>
            <person name="Ikeo K."/>
            <person name="Iwama A."/>
            <person name="Ishikawa T."/>
            <person name="Jakt M."/>
            <person name="Kanapin A."/>
            <person name="Katoh M."/>
            <person name="Kawasawa Y."/>
            <person name="Kelso J."/>
            <person name="Kitamura H."/>
            <person name="Kitano H."/>
            <person name="Kollias G."/>
            <person name="Krishnan S.P."/>
            <person name="Kruger A."/>
            <person name="Kummerfeld S.K."/>
            <person name="Kurochkin I.V."/>
            <person name="Lareau L.F."/>
            <person name="Lazarevic D."/>
            <person name="Lipovich L."/>
            <person name="Liu J."/>
            <person name="Liuni S."/>
            <person name="McWilliam S."/>
            <person name="Madan Babu M."/>
            <person name="Madera M."/>
            <person name="Marchionni L."/>
            <person name="Matsuda H."/>
            <person name="Matsuzawa S."/>
            <person name="Miki H."/>
            <person name="Mignone F."/>
            <person name="Miyake S."/>
            <person name="Morris K."/>
            <person name="Mottagui-Tabar S."/>
            <person name="Mulder N."/>
            <person name="Nakano N."/>
            <person name="Nakauchi H."/>
            <person name="Ng P."/>
            <person name="Nilsson R."/>
            <person name="Nishiguchi S."/>
            <person name="Nishikawa S."/>
            <person name="Nori F."/>
            <person name="Ohara O."/>
            <person name="Okazaki Y."/>
            <person name="Orlando V."/>
            <person name="Pang K.C."/>
            <person name="Pavan W.J."/>
            <person name="Pavesi G."/>
            <person name="Pesole G."/>
            <person name="Petrovsky N."/>
            <person name="Piazza S."/>
            <person name="Reed J."/>
            <person name="Reid J.F."/>
            <person name="Ring B.Z."/>
            <person name="Ringwald M."/>
            <person name="Rost B."/>
            <person name="Ruan Y."/>
            <person name="Salzberg S.L."/>
            <person name="Sandelin A."/>
            <person name="Schneider C."/>
            <person name="Schoenbach C."/>
            <person name="Sekiguchi K."/>
            <person name="Semple C.A."/>
            <person name="Seno S."/>
            <person name="Sessa L."/>
            <person name="Sheng Y."/>
            <person name="Shibata Y."/>
            <person name="Shimada H."/>
            <person name="Shimada K."/>
            <person name="Silva D."/>
            <person name="Sinclair B."/>
            <person name="Sperling S."/>
            <person name="Stupka E."/>
            <person name="Sugiura K."/>
            <person name="Sultana R."/>
            <person name="Takenaka Y."/>
            <person name="Taki K."/>
            <person name="Tammoja K."/>
            <person name="Tan S.L."/>
            <person name="Tang S."/>
            <person name="Taylor M.S."/>
            <person name="Tegner J."/>
            <person name="Teichmann S.A."/>
            <person name="Ueda H.R."/>
            <person name="van Nimwegen E."/>
            <person name="Verardo R."/>
            <person name="Wei C.L."/>
            <person name="Yagi K."/>
            <person name="Yamanishi H."/>
            <person name="Zabarovsky E."/>
            <person name="Zhu S."/>
            <person name="Zimmer A."/>
            <person name="Hide W."/>
            <person name="Bult C."/>
            <person name="Grimmond S.M."/>
            <person name="Teasdale R.D."/>
            <person name="Liu E.T."/>
            <person name="Brusic V."/>
            <person name="Quackenbush J."/>
            <person name="Wahlestedt C."/>
            <person name="Mattick J.S."/>
            <person name="Hume D.A."/>
            <person name="Kai C."/>
            <person name="Sasaki D."/>
            <person name="Tomaru Y."/>
            <person name="Fukuda S."/>
            <person name="Kanamori-Katayama M."/>
            <person name="Suzuki M."/>
            <person name="Aoki J."/>
            <person name="Arakawa T."/>
            <person name="Iida J."/>
            <person name="Imamura K."/>
            <person name="Itoh M."/>
            <person name="Kato T."/>
            <person name="Kawaji H."/>
            <person name="Kawagashira N."/>
            <person name="Kawashima T."/>
            <person name="Kojima M."/>
            <person name="Kondo S."/>
            <person name="Konno H."/>
            <person name="Nakano K."/>
            <person name="Ninomiya N."/>
            <person name="Nishio T."/>
            <person name="Okada M."/>
            <person name="Plessy C."/>
            <person name="Shibata K."/>
            <person name="Shiraki T."/>
            <person name="Suzuki S."/>
            <person name="Tagami M."/>
            <person name="Waki K."/>
            <person name="Watahiki A."/>
            <person name="Okamura-Oho Y."/>
            <person name="Suzuki H."/>
            <person name="Kawai J."/>
            <person name="Hayashizaki Y."/>
        </authorList>
    </citation>
    <scope>NUCLEOTIDE SEQUENCE [LARGE SCALE MRNA] (ISOFORM 2)</scope>
    <source>
        <strain>C57BL/6J</strain>
        <tissue>Ovary</tissue>
    </source>
</reference>
<feature type="signal peptide" evidence="2">
    <location>
        <begin position="1"/>
        <end position="18"/>
    </location>
</feature>
<feature type="chain" id="PRO_5000253013" description="Collagen alpha-6(VI) chain">
    <location>
        <begin position="19"/>
        <end position="2265"/>
    </location>
</feature>
<feature type="domain" description="VWFA 1" evidence="3">
    <location>
        <begin position="26"/>
        <end position="205"/>
    </location>
</feature>
<feature type="domain" description="VWFA 2" evidence="3">
    <location>
        <begin position="228"/>
        <end position="406"/>
    </location>
</feature>
<feature type="domain" description="VWFA 3" evidence="3">
    <location>
        <begin position="435"/>
        <end position="605"/>
    </location>
</feature>
<feature type="domain" description="VWFA 4" evidence="3">
    <location>
        <begin position="621"/>
        <end position="790"/>
    </location>
</feature>
<feature type="domain" description="VWFA 5" evidence="3">
    <location>
        <begin position="808"/>
        <end position="981"/>
    </location>
</feature>
<feature type="domain" description="VWFA 6" evidence="3">
    <location>
        <begin position="999"/>
        <end position="1170"/>
    </location>
</feature>
<feature type="domain" description="VWFA 7" evidence="3">
    <location>
        <begin position="1186"/>
        <end position="1378"/>
    </location>
</feature>
<feature type="domain" description="VWFA 8" evidence="3">
    <location>
        <begin position="1756"/>
        <end position="1936"/>
    </location>
</feature>
<feature type="domain" description="VWFA 9" evidence="3">
    <location>
        <begin position="1964"/>
        <end position="2165"/>
    </location>
</feature>
<feature type="region of interest" description="Nonhelical region">
    <location>
        <begin position="19"/>
        <end position="1390"/>
    </location>
</feature>
<feature type="region of interest" description="Triple-helical region">
    <location>
        <begin position="1391"/>
        <end position="1724"/>
    </location>
</feature>
<feature type="region of interest" description="Disordered" evidence="4">
    <location>
        <begin position="1398"/>
        <end position="1722"/>
    </location>
</feature>
<feature type="region of interest" description="Nonhelical region">
    <location>
        <begin position="1725"/>
        <end position="2265"/>
    </location>
</feature>
<feature type="region of interest" description="Disordered" evidence="4">
    <location>
        <begin position="2186"/>
        <end position="2205"/>
    </location>
</feature>
<feature type="short sequence motif" description="Cell attachment site" evidence="2">
    <location>
        <begin position="1507"/>
        <end position="1509"/>
    </location>
</feature>
<feature type="compositionally biased region" description="Acidic residues" evidence="4">
    <location>
        <begin position="1455"/>
        <end position="1470"/>
    </location>
</feature>
<feature type="compositionally biased region" description="Basic and acidic residues" evidence="4">
    <location>
        <begin position="1497"/>
        <end position="1507"/>
    </location>
</feature>
<feature type="compositionally biased region" description="Basic residues" evidence="4">
    <location>
        <begin position="1546"/>
        <end position="1558"/>
    </location>
</feature>
<feature type="glycosylation site" description="N-linked (GlcNAc...) asparagine" evidence="2">
    <location>
        <position position="197"/>
    </location>
</feature>
<feature type="glycosylation site" description="N-linked (GlcNAc...) asparagine" evidence="2">
    <location>
        <position position="238"/>
    </location>
</feature>
<feature type="glycosylation site" description="N-linked (GlcNAc...) asparagine" evidence="2">
    <location>
        <position position="346"/>
    </location>
</feature>
<feature type="glycosylation site" description="N-linked (GlcNAc...) asparagine" evidence="2">
    <location>
        <position position="760"/>
    </location>
</feature>
<feature type="splice variant" id="VSP_033916" description="In isoform 2." evidence="6">
    <original>N</original>
    <variation>S</variation>
    <location>
        <position position="1182"/>
    </location>
</feature>
<feature type="splice variant" id="VSP_033917" description="In isoform 2." evidence="6">
    <location>
        <begin position="1183"/>
        <end position="2265"/>
    </location>
</feature>
<feature type="sequence conflict" description="In Ref. 2; BAC35749." evidence="7" ref="2">
    <original>H</original>
    <variation>N</variation>
    <location>
        <position position="923"/>
    </location>
</feature>
<name>CO6A6_MOUSE</name>
<sequence>MLLVLCLTMICFHVCVNQDSGPEYADVVFLVDSSDHLGLKSFPLVKTFIHKMISSLPIEANKYRVALAQYSDALHNEFQLGTFKNRNPMLNHLKKNFGFIGGSLKIGNALQEAHRTYFSAPTNGRDKKQFPPILVVLASAESEDDVEEAAKALREDGVKIISVGVQKASEENLKAMATSQFHFNLRTARDLSVFAPNMTEIIKDVTQYREGMADDIIVEACQGPSVADVVFLLDMAINGSQEDLDHLKAFLGESISALDIKENCMRVGLVTYSNETRVISSLSTGNNKTEVLQRIQDLSPQVGQAYTGAALRKTRKEIFSAQRGSRKNQGVPQIAVLVTHRASEDNVTKAAVNLRREGVTIFTMGIEGANPDELEKIASHPAEQFTSKLGNFSELATHNQTFLKKLRNQITHTVSVFSERTETLKSACVDTEEADIYLLIDGSGSTQPTDFHEMKTFLSEVVGMFNIAPHKVRVGAVQYADTWDLEFEISKYSNKPDLGKAIENIRQMGGNTNTGAALNFTLKLLQRAKKERGSKVPCHLVVLTNGMSRDSVLGPAHKLREENIRVHAIGVKEANQTQLREIAGEEKRVYYVHEFDALRNIRNQVVQEICAEEACRDMKADIMFLVDSSGSIGPENFSKMKMFMKNLVSKSQIGADRVQIGVVQFSHENKEEFQLNTFMSQSDIANAIDRMTHIGETTLTGSALTFVSQYFSPDKGARPNVRKFLILITDGEAQDIVRDPAIALRKEGVIIYSVGVFGSNVTQLEEISGKPEMVFYVENFDILQHIEDDLVLGICSPREECKRIEVLDVVFVIDSSGSIDYQEYNIMKDFMIGLVKKADVGKNQVRFGALKYADDPEVLFYLDELGTKLEVVSVLQNDHPMGGNTYTAEALAFSDHMFTEARGSRLHKGVPQVLIVITDGESHDAEKLNTTAKALRDKGILVLAVGIAGANSWELLAMAGSSDKYYFVETFGGLKGIFSDVSASVCNSSKVDCEIEKVDLVFLMDGSNSIHPDDFQKMKGFLVSVVQDFDVSLNRVRIGVAQFSDSYRSEFLLGTFTGEREISTQIEGIQQIFGYTHIGDALRKVKYYFQPDMGSRINAGTPQVLLVLTDGRSQDEVAQAAEELRHKGVDIYSVGIGDVDDQELVQITGTAEKKLTVHNFDELKKVKKRIVRNICTSGGESNCFVDVVVGFDISSLQRGQTLLEGQPWMGSYLQDLLRAISSLNGVSCEVGTETQVSIAFQVTNAMERYPSKFEIYSENILSSLQGVTVNGPSRLNANLLSSLWDTFQNKSAARGKVVLLFSDGLDDGIEKLEQKSDELRKEGLNALITIAVDGAADSSDLADLLYIEFGKGFEYRTQFTIGMRNLGSQLSRQLINVAERTCCCLLCKCTGGDGAMGDPGSAGKKGPPGFKGSDGYLGEEGIAGERGASGPMGEQGTKGCFGAKGPKGTRGLSGEEGEVGEDGLDGLDGEQGDHGIPGRRGEKGDEGSQGNPGRRGAAGDRGAKGLRGDPGTPGRDSSIQGPKGLKGDLGRQGRRGWPGSPGTPGSRRKMVVHGRRGHIGPQGNPGTPGPDGLAGSPGLRGPQGPRGEVGEKGEKGSLGMKGPQGPPGPGGQAGSQGHLGSQGNKGEPGDLGEKGAAGFPGPRGLQGDDGSPGYGSIGRKGTKGQEGFPGESGLKGDIGDPGDPGEAGPKGARGKTVSAGIPGEPGSPGEPGPPGRKGVKGARGLASFSTCDLIQYVRDHSPGRHGKPECPVHPTELVFVLDQSRDVTEQDFERMKGMMVSLVRDVKVREANCPVGARVAILAYNSHTRHLIRFSDAYRKDQLLTAIKALPYERSSDSREIGKAMRFISRNVFKRTLPGAHVRRIATFFSSGPSADAQTITTAAMEFSALDIVPVVIAFSNVPSVKRAFSIDDTGTFQVIVVPSGSDEGPALERLQRCTFCYDLCKPDASCDQAKPPPIQSYLDTAFLLDGSRHVGSAEFEDMRDFLEALLDHFEITSEPETSVTGDRVALLSHAPLDFLPNTQRSPVRTEFNLTSYSSKRLMKRHVDQAVQQLHGDAFLGHALGWALDNVFLNTPNLRRNKVIFVISAGETSHLDAETLKKESLRAKCHGYALFVFSLGPDWDDKELEDLASHPVDQHLIQLGRIHKPDHGYSVKFVKSFINSIRHGINKYPPVNLKAKCNRLGSRDLKPPPRQFRSFVPGPQKANLKDHTAEAAKLFQDKKRLSSMLKGGRATISSLSRSTRYAFKQGKEAIKATSKLGKRSA</sequence>
<keyword id="KW-0025">Alternative splicing</keyword>
<keyword id="KW-0130">Cell adhesion</keyword>
<keyword id="KW-0176">Collagen</keyword>
<keyword id="KW-0272">Extracellular matrix</keyword>
<keyword id="KW-0325">Glycoprotein</keyword>
<keyword id="KW-0379">Hydroxylation</keyword>
<keyword id="KW-1185">Reference proteome</keyword>
<keyword id="KW-0677">Repeat</keyword>
<keyword id="KW-0964">Secreted</keyword>
<keyword id="KW-0732">Signal</keyword>
<proteinExistence type="evidence at protein level"/>
<protein>
    <recommendedName>
        <fullName>Collagen alpha-6(VI) chain</fullName>
    </recommendedName>
</protein>
<comment type="function">
    <text evidence="1">Collagen VI acts as a cell-binding protein.</text>
</comment>
<comment type="subunit">
    <text evidence="8">Trimers composed of three different chains: alpha-1(VI), alpha-2(VI), and alpha-3(VI) or alpha-4(VI) or alpha-5(VI) or alpha-6(VI).</text>
</comment>
<comment type="subcellular location">
    <subcellularLocation>
        <location evidence="5">Secreted</location>
        <location evidence="5">Extracellular space</location>
        <location evidence="5">Extracellular matrix</location>
    </subcellularLocation>
    <text>Deposed in the extracellular matrix of skeletal muscle.</text>
</comment>
<comment type="alternative products">
    <event type="alternative splicing"/>
    <isoform>
        <id>Q8C6K9-1</id>
        <name>1</name>
        <sequence type="displayed"/>
    </isoform>
    <isoform>
        <id>Q8C6K9-2</id>
        <name>2</name>
        <sequence type="described" ref="VSP_033916 VSP_033917"/>
    </isoform>
</comment>
<comment type="tissue specificity">
    <text evidence="5">In newborn, it is expressed in lung, heart, kidney, muscle, brain, intestine, skin, femur and sternum. In adult, it is expressed in lung, heart, muscle, ovary, brain, liver and sternum.</text>
</comment>
<comment type="PTM">
    <text evidence="1">Prolines at the third position of the tripeptide repeating unit (G-X-Y) are hydroxylated in some or all of the chains.</text>
</comment>
<comment type="similarity">
    <text evidence="7">Belongs to the type VI collagen family.</text>
</comment>
<organism>
    <name type="scientific">Mus musculus</name>
    <name type="common">Mouse</name>
    <dbReference type="NCBI Taxonomy" id="10090"/>
    <lineage>
        <taxon>Eukaryota</taxon>
        <taxon>Metazoa</taxon>
        <taxon>Chordata</taxon>
        <taxon>Craniata</taxon>
        <taxon>Vertebrata</taxon>
        <taxon>Euteleostomi</taxon>
        <taxon>Mammalia</taxon>
        <taxon>Eutheria</taxon>
        <taxon>Euarchontoglires</taxon>
        <taxon>Glires</taxon>
        <taxon>Rodentia</taxon>
        <taxon>Myomorpha</taxon>
        <taxon>Muroidea</taxon>
        <taxon>Muridae</taxon>
        <taxon>Murinae</taxon>
        <taxon>Mus</taxon>
        <taxon>Mus</taxon>
    </lineage>
</organism>
<accession>Q8C6K9</accession>
<accession>A6H587</accession>
<accession>A6H588</accession>
<accession>A6H589</accession>
<accession>A6H590</accession>
<evidence type="ECO:0000250" key="1"/>
<evidence type="ECO:0000255" key="2"/>
<evidence type="ECO:0000255" key="3">
    <source>
        <dbReference type="PROSITE-ProRule" id="PRU00219"/>
    </source>
</evidence>
<evidence type="ECO:0000256" key="4">
    <source>
        <dbReference type="SAM" id="MobiDB-lite"/>
    </source>
</evidence>
<evidence type="ECO:0000269" key="5">
    <source>
    </source>
</evidence>
<evidence type="ECO:0000303" key="6">
    <source>
    </source>
</evidence>
<evidence type="ECO:0000305" key="7"/>
<evidence type="ECO:0000305" key="8">
    <source>
    </source>
</evidence>
<dbReference type="EMBL" id="AM748259">
    <property type="protein sequence ID" value="CAO01894.1"/>
    <property type="molecule type" value="mRNA"/>
</dbReference>
<dbReference type="EMBL" id="AM748260">
    <property type="protein sequence ID" value="CAO01895.1"/>
    <property type="molecule type" value="mRNA"/>
</dbReference>
<dbReference type="EMBL" id="AM748261">
    <property type="protein sequence ID" value="CAO01896.1"/>
    <property type="molecule type" value="mRNA"/>
</dbReference>
<dbReference type="EMBL" id="AM748262">
    <property type="protein sequence ID" value="CAO01897.1"/>
    <property type="molecule type" value="mRNA"/>
</dbReference>
<dbReference type="EMBL" id="AK054356">
    <property type="protein sequence ID" value="BAC35749.1"/>
    <property type="molecule type" value="mRNA"/>
</dbReference>
<dbReference type="CCDS" id="CCDS23468.1">
    <molecule id="Q8C6K9-2"/>
</dbReference>
<dbReference type="CCDS" id="CCDS52906.1">
    <molecule id="Q8C6K9-1"/>
</dbReference>
<dbReference type="RefSeq" id="NP_001096077.1">
    <molecule id="Q8C6K9-1"/>
    <property type="nucleotide sequence ID" value="NM_001102607.1"/>
</dbReference>
<dbReference type="RefSeq" id="NP_766515.2">
    <molecule id="Q8C6K9-2"/>
    <property type="nucleotide sequence ID" value="NM_172927.3"/>
</dbReference>
<dbReference type="SMR" id="Q8C6K9"/>
<dbReference type="FunCoup" id="Q8C6K9">
    <property type="interactions" value="562"/>
</dbReference>
<dbReference type="STRING" id="10090.ENSMUSP00000096040"/>
<dbReference type="GlyCosmos" id="Q8C6K9">
    <property type="glycosylation" value="4 sites, No reported glycans"/>
</dbReference>
<dbReference type="GlyGen" id="Q8C6K9">
    <property type="glycosylation" value="9 sites, 3 N-linked glycans (3 sites)"/>
</dbReference>
<dbReference type="iPTMnet" id="Q8C6K9"/>
<dbReference type="PhosphoSitePlus" id="Q8C6K9"/>
<dbReference type="jPOST" id="Q8C6K9"/>
<dbReference type="PaxDb" id="10090-ENSMUSP00000096040"/>
<dbReference type="ProteomicsDB" id="283669">
    <molecule id="Q8C6K9-1"/>
</dbReference>
<dbReference type="ProteomicsDB" id="283670">
    <molecule id="Q8C6K9-2"/>
</dbReference>
<dbReference type="Antibodypedia" id="56016">
    <property type="antibodies" value="54 antibodies from 10 providers"/>
</dbReference>
<dbReference type="DNASU" id="245026"/>
<dbReference type="Ensembl" id="ENSMUST00000060896.5">
    <molecule id="Q8C6K9-2"/>
    <property type="protein sequence ID" value="ENSMUSP00000060840.5"/>
    <property type="gene ID" value="ENSMUSG00000043719.15"/>
</dbReference>
<dbReference type="Ensembl" id="ENSMUST00000098441.10">
    <molecule id="Q8C6K9-1"/>
    <property type="protein sequence ID" value="ENSMUSP00000096040.4"/>
    <property type="gene ID" value="ENSMUSG00000043719.15"/>
</dbReference>
<dbReference type="GeneID" id="245026"/>
<dbReference type="KEGG" id="mmu:245026"/>
<dbReference type="UCSC" id="uc009ris.1">
    <molecule id="Q8C6K9-1"/>
    <property type="organism name" value="mouse"/>
</dbReference>
<dbReference type="UCSC" id="uc009rit.1">
    <molecule id="Q8C6K9-2"/>
    <property type="organism name" value="mouse"/>
</dbReference>
<dbReference type="AGR" id="MGI:2444259"/>
<dbReference type="CTD" id="131873"/>
<dbReference type="MGI" id="MGI:2444259">
    <property type="gene designation" value="Col6a6"/>
</dbReference>
<dbReference type="VEuPathDB" id="HostDB:ENSMUSG00000043719"/>
<dbReference type="eggNOG" id="KOG3544">
    <property type="taxonomic scope" value="Eukaryota"/>
</dbReference>
<dbReference type="GeneTree" id="ENSGT00940000155619"/>
<dbReference type="HOGENOM" id="CLU_000182_0_0_1"/>
<dbReference type="InParanoid" id="Q8C6K9"/>
<dbReference type="OMA" id="TWDDKEL"/>
<dbReference type="OrthoDB" id="10256829at2759"/>
<dbReference type="PhylomeDB" id="Q8C6K9"/>
<dbReference type="Reactome" id="R-MMU-1442490">
    <property type="pathway name" value="Collagen degradation"/>
</dbReference>
<dbReference type="Reactome" id="R-MMU-1650814">
    <property type="pathway name" value="Collagen biosynthesis and modifying enzymes"/>
</dbReference>
<dbReference type="Reactome" id="R-MMU-186797">
    <property type="pathway name" value="Signaling by PDGF"/>
</dbReference>
<dbReference type="Reactome" id="R-MMU-2022090">
    <property type="pathway name" value="Assembly of collagen fibrils and other multimeric structures"/>
</dbReference>
<dbReference type="Reactome" id="R-MMU-216083">
    <property type="pathway name" value="Integrin cell surface interactions"/>
</dbReference>
<dbReference type="Reactome" id="R-MMU-3000178">
    <property type="pathway name" value="ECM proteoglycans"/>
</dbReference>
<dbReference type="Reactome" id="R-MMU-419037">
    <property type="pathway name" value="NCAM1 interactions"/>
</dbReference>
<dbReference type="Reactome" id="R-MMU-8948216">
    <property type="pathway name" value="Collagen chain trimerization"/>
</dbReference>
<dbReference type="BioGRID-ORCS" id="245026">
    <property type="hits" value="4 hits in 76 CRISPR screens"/>
</dbReference>
<dbReference type="PRO" id="PR:Q8C6K9"/>
<dbReference type="Proteomes" id="UP000000589">
    <property type="component" value="Chromosome 9"/>
</dbReference>
<dbReference type="RNAct" id="Q8C6K9">
    <property type="molecule type" value="protein"/>
</dbReference>
<dbReference type="Bgee" id="ENSMUSG00000043719">
    <property type="expression patterns" value="Expressed in primary oocyte and 30 other cell types or tissues"/>
</dbReference>
<dbReference type="ExpressionAtlas" id="Q8C6K9">
    <property type="expression patterns" value="baseline and differential"/>
</dbReference>
<dbReference type="GO" id="GO:0005589">
    <property type="term" value="C:collagen type VI trimer"/>
    <property type="evidence" value="ECO:0000304"/>
    <property type="project" value="GO_Central"/>
</dbReference>
<dbReference type="GO" id="GO:0062023">
    <property type="term" value="C:collagen-containing extracellular matrix"/>
    <property type="evidence" value="ECO:0007005"/>
    <property type="project" value="BHF-UCL"/>
</dbReference>
<dbReference type="GO" id="GO:0031012">
    <property type="term" value="C:extracellular matrix"/>
    <property type="evidence" value="ECO:0000266"/>
    <property type="project" value="MGI"/>
</dbReference>
<dbReference type="GO" id="GO:0005576">
    <property type="term" value="C:extracellular region"/>
    <property type="evidence" value="ECO:0000314"/>
    <property type="project" value="MGI"/>
</dbReference>
<dbReference type="GO" id="GO:0007155">
    <property type="term" value="P:cell adhesion"/>
    <property type="evidence" value="ECO:0007669"/>
    <property type="project" value="UniProtKB-KW"/>
</dbReference>
<dbReference type="CDD" id="cd01472">
    <property type="entry name" value="vWA_collagen"/>
    <property type="match status" value="3"/>
</dbReference>
<dbReference type="CDD" id="cd01450">
    <property type="entry name" value="vWFA_subfamily_ECM"/>
    <property type="match status" value="3"/>
</dbReference>
<dbReference type="FunFam" id="3.40.50.410:FF:000004">
    <property type="entry name" value="collagen alpha-6(VI) chain"/>
    <property type="match status" value="3"/>
</dbReference>
<dbReference type="FunFam" id="3.40.50.410:FF:000003">
    <property type="entry name" value="Collagen type VI alpha 3 chain"/>
    <property type="match status" value="2"/>
</dbReference>
<dbReference type="FunFam" id="3.40.50.410:FF:000016">
    <property type="entry name" value="Collagen type VI alpha 3 chain"/>
    <property type="match status" value="1"/>
</dbReference>
<dbReference type="FunFam" id="3.40.50.410:FF:000044">
    <property type="entry name" value="Collagen type VI alpha 6 chain"/>
    <property type="match status" value="1"/>
</dbReference>
<dbReference type="FunFam" id="3.40.50.410:FF:000021">
    <property type="entry name" value="Collagen, type VI, alpha 3"/>
    <property type="match status" value="1"/>
</dbReference>
<dbReference type="Gene3D" id="1.20.5.320">
    <property type="entry name" value="6-Phosphogluconate Dehydrogenase, domain 3"/>
    <property type="match status" value="1"/>
</dbReference>
<dbReference type="Gene3D" id="3.40.50.410">
    <property type="entry name" value="von Willebrand factor, type A domain"/>
    <property type="match status" value="8"/>
</dbReference>
<dbReference type="InterPro" id="IPR008160">
    <property type="entry name" value="Collagen"/>
</dbReference>
<dbReference type="InterPro" id="IPR050525">
    <property type="entry name" value="ECM_Assembly_Org"/>
</dbReference>
<dbReference type="InterPro" id="IPR002035">
    <property type="entry name" value="VWF_A"/>
</dbReference>
<dbReference type="InterPro" id="IPR036465">
    <property type="entry name" value="vWFA_dom_sf"/>
</dbReference>
<dbReference type="PANTHER" id="PTHR24020">
    <property type="entry name" value="COLLAGEN ALPHA"/>
    <property type="match status" value="1"/>
</dbReference>
<dbReference type="Pfam" id="PF01391">
    <property type="entry name" value="Collagen"/>
    <property type="match status" value="4"/>
</dbReference>
<dbReference type="Pfam" id="PF00092">
    <property type="entry name" value="VWA"/>
    <property type="match status" value="8"/>
</dbReference>
<dbReference type="PRINTS" id="PR00453">
    <property type="entry name" value="VWFADOMAIN"/>
</dbReference>
<dbReference type="SMART" id="SM00327">
    <property type="entry name" value="VWA"/>
    <property type="match status" value="9"/>
</dbReference>
<dbReference type="SUPFAM" id="SSF53300">
    <property type="entry name" value="vWA-like"/>
    <property type="match status" value="9"/>
</dbReference>
<dbReference type="PROSITE" id="PS50234">
    <property type="entry name" value="VWFA"/>
    <property type="match status" value="8"/>
</dbReference>
<gene>
    <name type="primary">Col6a6</name>
</gene>